<comment type="function">
    <text evidence="1">Cell wall formation. Adds enolpyruvyl to UDP-N-acetylglucosamine.</text>
</comment>
<comment type="catalytic activity">
    <reaction evidence="1">
        <text>phosphoenolpyruvate + UDP-N-acetyl-alpha-D-glucosamine = UDP-N-acetyl-3-O-(1-carboxyvinyl)-alpha-D-glucosamine + phosphate</text>
        <dbReference type="Rhea" id="RHEA:18681"/>
        <dbReference type="ChEBI" id="CHEBI:43474"/>
        <dbReference type="ChEBI" id="CHEBI:57705"/>
        <dbReference type="ChEBI" id="CHEBI:58702"/>
        <dbReference type="ChEBI" id="CHEBI:68483"/>
        <dbReference type="EC" id="2.5.1.7"/>
    </reaction>
</comment>
<comment type="pathway">
    <text evidence="1">Cell wall biogenesis; peptidoglycan biosynthesis.</text>
</comment>
<comment type="subcellular location">
    <subcellularLocation>
        <location evidence="1">Cytoplasm</location>
    </subcellularLocation>
</comment>
<comment type="similarity">
    <text evidence="1">Belongs to the EPSP synthase family. MurA subfamily.</text>
</comment>
<feature type="chain" id="PRO_0000231232" description="UDP-N-acetylglucosamine 1-carboxyvinyltransferase 1">
    <location>
        <begin position="1"/>
        <end position="443"/>
    </location>
</feature>
<feature type="active site" description="Proton donor" evidence="1">
    <location>
        <position position="119"/>
    </location>
</feature>
<feature type="binding site" evidence="1">
    <location>
        <begin position="22"/>
        <end position="23"/>
    </location>
    <ligand>
        <name>phosphoenolpyruvate</name>
        <dbReference type="ChEBI" id="CHEBI:58702"/>
    </ligand>
</feature>
<feature type="binding site" evidence="1">
    <location>
        <position position="95"/>
    </location>
    <ligand>
        <name>UDP-N-acetyl-alpha-D-glucosamine</name>
        <dbReference type="ChEBI" id="CHEBI:57705"/>
    </ligand>
</feature>
<feature type="binding site" evidence="1">
    <location>
        <begin position="124"/>
        <end position="128"/>
    </location>
    <ligand>
        <name>UDP-N-acetyl-alpha-D-glucosamine</name>
        <dbReference type="ChEBI" id="CHEBI:57705"/>
    </ligand>
</feature>
<feature type="binding site" evidence="1">
    <location>
        <position position="308"/>
    </location>
    <ligand>
        <name>UDP-N-acetyl-alpha-D-glucosamine</name>
        <dbReference type="ChEBI" id="CHEBI:57705"/>
    </ligand>
</feature>
<feature type="binding site" evidence="1">
    <location>
        <position position="330"/>
    </location>
    <ligand>
        <name>UDP-N-acetyl-alpha-D-glucosamine</name>
        <dbReference type="ChEBI" id="CHEBI:57705"/>
    </ligand>
</feature>
<feature type="modified residue" description="2-(S-cysteinyl)pyruvic acid O-phosphothioketal" evidence="1">
    <location>
        <position position="119"/>
    </location>
</feature>
<dbReference type="EC" id="2.5.1.7" evidence="1"/>
<dbReference type="EMBL" id="BA000028">
    <property type="protein sequence ID" value="BAC14928.1"/>
    <property type="molecule type" value="Genomic_DNA"/>
</dbReference>
<dbReference type="RefSeq" id="WP_011067369.1">
    <property type="nucleotide sequence ID" value="NC_004193.1"/>
</dbReference>
<dbReference type="SMR" id="Q8EM86"/>
<dbReference type="STRING" id="221109.gene:10735224"/>
<dbReference type="KEGG" id="oih:OB2972"/>
<dbReference type="eggNOG" id="COG0766">
    <property type="taxonomic scope" value="Bacteria"/>
</dbReference>
<dbReference type="HOGENOM" id="CLU_027387_0_0_9"/>
<dbReference type="OrthoDB" id="9803760at2"/>
<dbReference type="PhylomeDB" id="Q8EM86"/>
<dbReference type="UniPathway" id="UPA00219"/>
<dbReference type="Proteomes" id="UP000000822">
    <property type="component" value="Chromosome"/>
</dbReference>
<dbReference type="GO" id="GO:0005737">
    <property type="term" value="C:cytoplasm"/>
    <property type="evidence" value="ECO:0007669"/>
    <property type="project" value="UniProtKB-SubCell"/>
</dbReference>
<dbReference type="GO" id="GO:0008760">
    <property type="term" value="F:UDP-N-acetylglucosamine 1-carboxyvinyltransferase activity"/>
    <property type="evidence" value="ECO:0007669"/>
    <property type="project" value="UniProtKB-UniRule"/>
</dbReference>
<dbReference type="GO" id="GO:0051301">
    <property type="term" value="P:cell division"/>
    <property type="evidence" value="ECO:0007669"/>
    <property type="project" value="UniProtKB-KW"/>
</dbReference>
<dbReference type="GO" id="GO:0071555">
    <property type="term" value="P:cell wall organization"/>
    <property type="evidence" value="ECO:0007669"/>
    <property type="project" value="UniProtKB-KW"/>
</dbReference>
<dbReference type="GO" id="GO:0009252">
    <property type="term" value="P:peptidoglycan biosynthetic process"/>
    <property type="evidence" value="ECO:0007669"/>
    <property type="project" value="UniProtKB-UniRule"/>
</dbReference>
<dbReference type="GO" id="GO:0008360">
    <property type="term" value="P:regulation of cell shape"/>
    <property type="evidence" value="ECO:0007669"/>
    <property type="project" value="UniProtKB-KW"/>
</dbReference>
<dbReference type="GO" id="GO:0019277">
    <property type="term" value="P:UDP-N-acetylgalactosamine biosynthetic process"/>
    <property type="evidence" value="ECO:0007669"/>
    <property type="project" value="InterPro"/>
</dbReference>
<dbReference type="CDD" id="cd01555">
    <property type="entry name" value="UdpNAET"/>
    <property type="match status" value="1"/>
</dbReference>
<dbReference type="FunFam" id="3.65.10.10:FF:000001">
    <property type="entry name" value="UDP-N-acetylglucosamine 1-carboxyvinyltransferase"/>
    <property type="match status" value="1"/>
</dbReference>
<dbReference type="Gene3D" id="3.65.10.10">
    <property type="entry name" value="Enolpyruvate transferase domain"/>
    <property type="match status" value="2"/>
</dbReference>
<dbReference type="HAMAP" id="MF_00111">
    <property type="entry name" value="MurA"/>
    <property type="match status" value="1"/>
</dbReference>
<dbReference type="InterPro" id="IPR001986">
    <property type="entry name" value="Enolpyruvate_Tfrase_dom"/>
</dbReference>
<dbReference type="InterPro" id="IPR036968">
    <property type="entry name" value="Enolpyruvate_Tfrase_sf"/>
</dbReference>
<dbReference type="InterPro" id="IPR050068">
    <property type="entry name" value="MurA_subfamily"/>
</dbReference>
<dbReference type="InterPro" id="IPR013792">
    <property type="entry name" value="RNA3'P_cycl/enolpyr_Trfase_a/b"/>
</dbReference>
<dbReference type="InterPro" id="IPR005750">
    <property type="entry name" value="UDP_GlcNAc_COvinyl_MurA"/>
</dbReference>
<dbReference type="NCBIfam" id="TIGR01072">
    <property type="entry name" value="murA"/>
    <property type="match status" value="1"/>
</dbReference>
<dbReference type="NCBIfam" id="NF006873">
    <property type="entry name" value="PRK09369.1"/>
    <property type="match status" value="1"/>
</dbReference>
<dbReference type="PANTHER" id="PTHR43783">
    <property type="entry name" value="UDP-N-ACETYLGLUCOSAMINE 1-CARBOXYVINYLTRANSFERASE"/>
    <property type="match status" value="1"/>
</dbReference>
<dbReference type="PANTHER" id="PTHR43783:SF1">
    <property type="entry name" value="UDP-N-ACETYLGLUCOSAMINE 1-CARBOXYVINYLTRANSFERASE"/>
    <property type="match status" value="1"/>
</dbReference>
<dbReference type="Pfam" id="PF00275">
    <property type="entry name" value="EPSP_synthase"/>
    <property type="match status" value="1"/>
</dbReference>
<dbReference type="SUPFAM" id="SSF55205">
    <property type="entry name" value="EPT/RTPC-like"/>
    <property type="match status" value="1"/>
</dbReference>
<name>MURA1_OCEIH</name>
<organism>
    <name type="scientific">Oceanobacillus iheyensis (strain DSM 14371 / CIP 107618 / JCM 11309 / KCTC 3954 / HTE831)</name>
    <dbReference type="NCBI Taxonomy" id="221109"/>
    <lineage>
        <taxon>Bacteria</taxon>
        <taxon>Bacillati</taxon>
        <taxon>Bacillota</taxon>
        <taxon>Bacilli</taxon>
        <taxon>Bacillales</taxon>
        <taxon>Bacillaceae</taxon>
        <taxon>Oceanobacillus</taxon>
    </lineage>
</organism>
<keyword id="KW-0131">Cell cycle</keyword>
<keyword id="KW-0132">Cell division</keyword>
<keyword id="KW-0133">Cell shape</keyword>
<keyword id="KW-0961">Cell wall biogenesis/degradation</keyword>
<keyword id="KW-0963">Cytoplasm</keyword>
<keyword id="KW-0573">Peptidoglycan synthesis</keyword>
<keyword id="KW-0670">Pyruvate</keyword>
<keyword id="KW-1185">Reference proteome</keyword>
<keyword id="KW-0808">Transferase</keyword>
<gene>
    <name evidence="1" type="primary">murA1</name>
    <name type="synonym">murA</name>
    <name type="ordered locus">OB2972</name>
</gene>
<accession>Q8EM86</accession>
<evidence type="ECO:0000255" key="1">
    <source>
        <dbReference type="HAMAP-Rule" id="MF_00111"/>
    </source>
</evidence>
<sequence length="443" mass="47651">MEKIIVSGGHQLNGTVRLEGAKNAVLPVLAASLIASEGESVIKEVPVLADVYTINEVLRNLNAEVEFDSTTKTVNINASQQLETEAPFEYVRKMRASVLVLGPLLARYGHAKVAMPGGCAIGSRPIDLHLKGFEAMGAEIHVGNGYVEANVNGRLQGAKIYLDMPSVGATENIMMAAALAEGKTVIENAAKEPEIVDLANYLNKMGANIVGAGTETIRIIGVEKLRGTEHMIIPDRIEAGTFMVASAITGGNVFIENAMREHLRSVISKLEEMNVDVIDENGGLRIIGPEKLKSTDIKTLPHPGFPTDMQSQMMSLMLRAEGTGVITETVFENRFMHVEEFRRMNANIKIEGRSVIIEGISELQGAEVAATDLRAAAALILAGLVSDGYTRVTELKHLDRGYVDIVDKLAALGADIKRVDENGVVVQPLYVTAAKESNEIAAD</sequence>
<proteinExistence type="inferred from homology"/>
<protein>
    <recommendedName>
        <fullName evidence="1">UDP-N-acetylglucosamine 1-carboxyvinyltransferase 1</fullName>
        <ecNumber evidence="1">2.5.1.7</ecNumber>
    </recommendedName>
    <alternativeName>
        <fullName evidence="1">Enoylpyruvate transferase 1</fullName>
    </alternativeName>
    <alternativeName>
        <fullName evidence="1">UDP-N-acetylglucosamine enolpyruvyl transferase 1</fullName>
        <shortName evidence="1">EPT 1</shortName>
    </alternativeName>
</protein>
<reference key="1">
    <citation type="journal article" date="2002" name="Nucleic Acids Res.">
        <title>Genome sequence of Oceanobacillus iheyensis isolated from the Iheya Ridge and its unexpected adaptive capabilities to extreme environments.</title>
        <authorList>
            <person name="Takami H."/>
            <person name="Takaki Y."/>
            <person name="Uchiyama I."/>
        </authorList>
    </citation>
    <scope>NUCLEOTIDE SEQUENCE [LARGE SCALE GENOMIC DNA]</scope>
    <source>
        <strain>DSM 14371 / CIP 107618 / JCM 11309 / KCTC 3954 / HTE831</strain>
    </source>
</reference>